<protein>
    <recommendedName>
        <fullName evidence="1">Large ribosomal subunit protein bL33C</fullName>
    </recommendedName>
    <alternativeName>
        <fullName>50S ribosomal protein L33 3</fullName>
    </alternativeName>
</protein>
<comment type="similarity">
    <text evidence="2">Belongs to the bacterial ribosomal protein bL33 family.</text>
</comment>
<evidence type="ECO:0000255" key="1">
    <source>
        <dbReference type="HAMAP-Rule" id="MF_00294"/>
    </source>
</evidence>
<evidence type="ECO:0000305" key="2"/>
<organism>
    <name type="scientific">Streptomyces coelicolor (strain ATCC BAA-471 / A3(2) / M145)</name>
    <dbReference type="NCBI Taxonomy" id="100226"/>
    <lineage>
        <taxon>Bacteria</taxon>
        <taxon>Bacillati</taxon>
        <taxon>Actinomycetota</taxon>
        <taxon>Actinomycetes</taxon>
        <taxon>Kitasatosporales</taxon>
        <taxon>Streptomycetaceae</taxon>
        <taxon>Streptomyces</taxon>
        <taxon>Streptomyces albidoflavus group</taxon>
    </lineage>
</organism>
<proteinExistence type="inferred from homology"/>
<accession>Q93S00</accession>
<dbReference type="EMBL" id="AL939106">
    <property type="protein sequence ID" value="CAC39632.1"/>
    <property type="molecule type" value="Genomic_DNA"/>
</dbReference>
<dbReference type="RefSeq" id="NP_624883.1">
    <property type="nucleotide sequence ID" value="NC_003888.3"/>
</dbReference>
<dbReference type="SMR" id="Q93S00"/>
<dbReference type="STRING" id="100226.gene:17758153"/>
<dbReference type="PaxDb" id="100226-SCO0570"/>
<dbReference type="KEGG" id="sco:SCO0570"/>
<dbReference type="PATRIC" id="fig|100226.15.peg.551"/>
<dbReference type="eggNOG" id="COG0267">
    <property type="taxonomic scope" value="Bacteria"/>
</dbReference>
<dbReference type="HOGENOM" id="CLU_190949_1_1_11"/>
<dbReference type="InParanoid" id="Q93S00"/>
<dbReference type="OrthoDB" id="21586at2"/>
<dbReference type="PhylomeDB" id="Q93S00"/>
<dbReference type="Proteomes" id="UP000001973">
    <property type="component" value="Chromosome"/>
</dbReference>
<dbReference type="GO" id="GO:0022625">
    <property type="term" value="C:cytosolic large ribosomal subunit"/>
    <property type="evidence" value="ECO:0000318"/>
    <property type="project" value="GO_Central"/>
</dbReference>
<dbReference type="GO" id="GO:0003735">
    <property type="term" value="F:structural constituent of ribosome"/>
    <property type="evidence" value="ECO:0000318"/>
    <property type="project" value="GO_Central"/>
</dbReference>
<dbReference type="GO" id="GO:0006412">
    <property type="term" value="P:translation"/>
    <property type="evidence" value="ECO:0007669"/>
    <property type="project" value="UniProtKB-UniRule"/>
</dbReference>
<dbReference type="FunFam" id="2.20.28.120:FF:000002">
    <property type="entry name" value="50S ribosomal protein L33"/>
    <property type="match status" value="1"/>
</dbReference>
<dbReference type="Gene3D" id="2.20.28.120">
    <property type="entry name" value="Ribosomal protein L33"/>
    <property type="match status" value="1"/>
</dbReference>
<dbReference type="HAMAP" id="MF_00294">
    <property type="entry name" value="Ribosomal_bL33"/>
    <property type="match status" value="1"/>
</dbReference>
<dbReference type="InterPro" id="IPR001705">
    <property type="entry name" value="Ribosomal_bL33"/>
</dbReference>
<dbReference type="InterPro" id="IPR018264">
    <property type="entry name" value="Ribosomal_bL33_CS"/>
</dbReference>
<dbReference type="InterPro" id="IPR038584">
    <property type="entry name" value="Ribosomal_bL33_sf"/>
</dbReference>
<dbReference type="InterPro" id="IPR011332">
    <property type="entry name" value="Ribosomal_zn-bd"/>
</dbReference>
<dbReference type="NCBIfam" id="NF001860">
    <property type="entry name" value="PRK00595.1"/>
    <property type="match status" value="1"/>
</dbReference>
<dbReference type="NCBIfam" id="TIGR01023">
    <property type="entry name" value="rpmG_bact"/>
    <property type="match status" value="1"/>
</dbReference>
<dbReference type="PANTHER" id="PTHR15238">
    <property type="entry name" value="54S RIBOSOMAL PROTEIN L39, MITOCHONDRIAL"/>
    <property type="match status" value="1"/>
</dbReference>
<dbReference type="PANTHER" id="PTHR15238:SF1">
    <property type="entry name" value="LARGE RIBOSOMAL SUBUNIT PROTEIN BL33M"/>
    <property type="match status" value="1"/>
</dbReference>
<dbReference type="Pfam" id="PF00471">
    <property type="entry name" value="Ribosomal_L33"/>
    <property type="match status" value="1"/>
</dbReference>
<dbReference type="SUPFAM" id="SSF57829">
    <property type="entry name" value="Zn-binding ribosomal proteins"/>
    <property type="match status" value="1"/>
</dbReference>
<dbReference type="PROSITE" id="PS00582">
    <property type="entry name" value="RIBOSOMAL_L33"/>
    <property type="match status" value="1"/>
</dbReference>
<keyword id="KW-1185">Reference proteome</keyword>
<keyword id="KW-0687">Ribonucleoprotein</keyword>
<keyword id="KW-0689">Ribosomal protein</keyword>
<gene>
    <name type="primary">rpmG3</name>
    <name type="synonym">rpmG2</name>
    <name type="ordered locus">SCO0570</name>
    <name type="ORF">SC5G5.02c</name>
</gene>
<sequence length="54" mass="6153">MARSTARPVVKLKSTAGTGVTYVTRKNRLNDPDRLVLRKYDPVAGEHVPFREER</sequence>
<reference key="1">
    <citation type="journal article" date="2002" name="Nature">
        <title>Complete genome sequence of the model actinomycete Streptomyces coelicolor A3(2).</title>
        <authorList>
            <person name="Bentley S.D."/>
            <person name="Chater K.F."/>
            <person name="Cerdeno-Tarraga A.-M."/>
            <person name="Challis G.L."/>
            <person name="Thomson N.R."/>
            <person name="James K.D."/>
            <person name="Harris D.E."/>
            <person name="Quail M.A."/>
            <person name="Kieser H."/>
            <person name="Harper D."/>
            <person name="Bateman A."/>
            <person name="Brown S."/>
            <person name="Chandra G."/>
            <person name="Chen C.W."/>
            <person name="Collins M."/>
            <person name="Cronin A."/>
            <person name="Fraser A."/>
            <person name="Goble A."/>
            <person name="Hidalgo J."/>
            <person name="Hornsby T."/>
            <person name="Howarth S."/>
            <person name="Huang C.-H."/>
            <person name="Kieser T."/>
            <person name="Larke L."/>
            <person name="Murphy L.D."/>
            <person name="Oliver K."/>
            <person name="O'Neil S."/>
            <person name="Rabbinowitsch E."/>
            <person name="Rajandream M.A."/>
            <person name="Rutherford K.M."/>
            <person name="Rutter S."/>
            <person name="Seeger K."/>
            <person name="Saunders D."/>
            <person name="Sharp S."/>
            <person name="Squares R."/>
            <person name="Squares S."/>
            <person name="Taylor K."/>
            <person name="Warren T."/>
            <person name="Wietzorrek A."/>
            <person name="Woodward J.R."/>
            <person name="Barrell B.G."/>
            <person name="Parkhill J."/>
            <person name="Hopwood D.A."/>
        </authorList>
    </citation>
    <scope>NUCLEOTIDE SEQUENCE [LARGE SCALE GENOMIC DNA]</scope>
    <source>
        <strain>ATCC BAA-471 / A3(2) / M145</strain>
    </source>
</reference>
<name>RL333_STRCO</name>
<feature type="chain" id="PRO_0000170243" description="Large ribosomal subunit protein bL33C">
    <location>
        <begin position="1"/>
        <end position="54"/>
    </location>
</feature>